<dbReference type="EC" id="3.1.3.48"/>
<dbReference type="EMBL" id="Z11115">
    <property type="protein sequence ID" value="CAA77456.1"/>
    <property type="molecule type" value="Genomic_DNA"/>
</dbReference>
<dbReference type="PIR" id="S15799">
    <property type="entry name" value="S15799"/>
</dbReference>
<dbReference type="RefSeq" id="NP_498972.1">
    <property type="nucleotide sequence ID" value="NM_066571.7"/>
</dbReference>
<dbReference type="SMR" id="P30634"/>
<dbReference type="BioGRID" id="41461">
    <property type="interactions" value="2"/>
</dbReference>
<dbReference type="FunCoup" id="P30634">
    <property type="interactions" value="82"/>
</dbReference>
<dbReference type="IntAct" id="P30634">
    <property type="interactions" value="2"/>
</dbReference>
<dbReference type="MINT" id="P30634"/>
<dbReference type="STRING" id="6239.ZK637.11.1"/>
<dbReference type="PaxDb" id="6239-ZK637.11"/>
<dbReference type="EnsemblMetazoa" id="ZK637.11.1">
    <property type="protein sequence ID" value="ZK637.11.1"/>
    <property type="gene ID" value="WBGene00000388"/>
</dbReference>
<dbReference type="GeneID" id="176260"/>
<dbReference type="KEGG" id="cel:CELE_ZK637.11"/>
<dbReference type="UCSC" id="ZK637.11">
    <property type="organism name" value="c. elegans"/>
</dbReference>
<dbReference type="AGR" id="WB:WBGene00000388"/>
<dbReference type="CTD" id="176260"/>
<dbReference type="WormBase" id="ZK637.11">
    <property type="protein sequence ID" value="CE00429"/>
    <property type="gene ID" value="WBGene00000388"/>
    <property type="gene designation" value="cdc-25.3"/>
</dbReference>
<dbReference type="eggNOG" id="KOG3772">
    <property type="taxonomic scope" value="Eukaryota"/>
</dbReference>
<dbReference type="GeneTree" id="ENSGT00970000196560"/>
<dbReference type="HOGENOM" id="CLU_931390_0_0_1"/>
<dbReference type="InParanoid" id="P30634"/>
<dbReference type="OMA" id="PCENCIV"/>
<dbReference type="OrthoDB" id="26523at2759"/>
<dbReference type="PhylomeDB" id="P30634"/>
<dbReference type="Reactome" id="R-CEL-156711">
    <property type="pathway name" value="Polo-like kinase mediated events"/>
</dbReference>
<dbReference type="Reactome" id="R-CEL-176187">
    <property type="pathway name" value="Activation of ATR in response to replication stress"/>
</dbReference>
<dbReference type="Reactome" id="R-CEL-5625740">
    <property type="pathway name" value="RHO GTPases activate PKNs"/>
</dbReference>
<dbReference type="Reactome" id="R-CEL-5689880">
    <property type="pathway name" value="Ub-specific processing proteases"/>
</dbReference>
<dbReference type="Reactome" id="R-CEL-69202">
    <property type="pathway name" value="Cyclin E associated events during G1/S transition"/>
</dbReference>
<dbReference type="Reactome" id="R-CEL-69273">
    <property type="pathway name" value="Cyclin A/B1/B2 associated events during G2/M transition"/>
</dbReference>
<dbReference type="Reactome" id="R-CEL-69601">
    <property type="pathway name" value="Ubiquitin Mediated Degradation of Phosphorylated Cdc25A"/>
</dbReference>
<dbReference type="Reactome" id="R-CEL-69656">
    <property type="pathway name" value="Cyclin A:Cdk2-associated events at S phase entry"/>
</dbReference>
<dbReference type="Reactome" id="R-CEL-75035">
    <property type="pathway name" value="Chk1/Chk2(Cds1) mediated inactivation of Cyclin B:Cdk1 complex"/>
</dbReference>
<dbReference type="PRO" id="PR:P30634"/>
<dbReference type="Proteomes" id="UP000001940">
    <property type="component" value="Chromosome III"/>
</dbReference>
<dbReference type="Bgee" id="WBGene00000388">
    <property type="expression patterns" value="Expressed in germ line (C elegans) and 3 other cell types or tissues"/>
</dbReference>
<dbReference type="GO" id="GO:0005737">
    <property type="term" value="C:cytoplasm"/>
    <property type="evidence" value="ECO:0000318"/>
    <property type="project" value="GO_Central"/>
</dbReference>
<dbReference type="GO" id="GO:0005634">
    <property type="term" value="C:nucleus"/>
    <property type="evidence" value="ECO:0000314"/>
    <property type="project" value="WormBase"/>
</dbReference>
<dbReference type="GO" id="GO:0004721">
    <property type="term" value="F:phosphoprotein phosphatase activity"/>
    <property type="evidence" value="ECO:0000250"/>
    <property type="project" value="WormBase"/>
</dbReference>
<dbReference type="GO" id="GO:0004725">
    <property type="term" value="F:protein tyrosine phosphatase activity"/>
    <property type="evidence" value="ECO:0000318"/>
    <property type="project" value="GO_Central"/>
</dbReference>
<dbReference type="GO" id="GO:0051301">
    <property type="term" value="P:cell division"/>
    <property type="evidence" value="ECO:0007669"/>
    <property type="project" value="UniProtKB-KW"/>
</dbReference>
<dbReference type="GO" id="GO:0000086">
    <property type="term" value="P:G2/M transition of mitotic cell cycle"/>
    <property type="evidence" value="ECO:0000318"/>
    <property type="project" value="GO_Central"/>
</dbReference>
<dbReference type="GO" id="GO:0000278">
    <property type="term" value="P:mitotic cell cycle"/>
    <property type="evidence" value="ECO:0000250"/>
    <property type="project" value="WormBase"/>
</dbReference>
<dbReference type="GO" id="GO:0010971">
    <property type="term" value="P:positive regulation of G2/M transition of mitotic cell cycle"/>
    <property type="evidence" value="ECO:0000318"/>
    <property type="project" value="GO_Central"/>
</dbReference>
<dbReference type="GO" id="GO:0110032">
    <property type="term" value="P:positive regulation of G2/MI transition of meiotic cell cycle"/>
    <property type="evidence" value="ECO:0000318"/>
    <property type="project" value="GO_Central"/>
</dbReference>
<dbReference type="CDD" id="cd01530">
    <property type="entry name" value="Cdc25"/>
    <property type="match status" value="1"/>
</dbReference>
<dbReference type="FunFam" id="3.40.250.10:FF:000021">
    <property type="entry name" value="M-phase inducer phosphatase cdc-25.2"/>
    <property type="match status" value="1"/>
</dbReference>
<dbReference type="Gene3D" id="3.40.250.10">
    <property type="entry name" value="Rhodanese-like domain"/>
    <property type="match status" value="1"/>
</dbReference>
<dbReference type="InterPro" id="IPR000751">
    <property type="entry name" value="MPI_Phosphatase"/>
</dbReference>
<dbReference type="InterPro" id="IPR001763">
    <property type="entry name" value="Rhodanese-like_dom"/>
</dbReference>
<dbReference type="InterPro" id="IPR036873">
    <property type="entry name" value="Rhodanese-like_dom_sf"/>
</dbReference>
<dbReference type="PANTHER" id="PTHR10828:SF76">
    <property type="entry name" value="M-PHASE INDUCER PHOSPHATASE"/>
    <property type="match status" value="1"/>
</dbReference>
<dbReference type="PANTHER" id="PTHR10828">
    <property type="entry name" value="M-PHASE INDUCER PHOSPHATASE DUAL SPECIFICITY PHOSPHATASE CDC25"/>
    <property type="match status" value="1"/>
</dbReference>
<dbReference type="Pfam" id="PF00581">
    <property type="entry name" value="Rhodanese"/>
    <property type="match status" value="1"/>
</dbReference>
<dbReference type="PRINTS" id="PR00716">
    <property type="entry name" value="MPIPHPHTASE"/>
</dbReference>
<dbReference type="SMART" id="SM00450">
    <property type="entry name" value="RHOD"/>
    <property type="match status" value="1"/>
</dbReference>
<dbReference type="SUPFAM" id="SSF52821">
    <property type="entry name" value="Rhodanese/Cell cycle control phosphatase"/>
    <property type="match status" value="1"/>
</dbReference>
<dbReference type="PROSITE" id="PS50206">
    <property type="entry name" value="RHODANESE_3"/>
    <property type="match status" value="1"/>
</dbReference>
<feature type="chain" id="PRO_0000198657" description="M-phase inducer phosphatase cdc-25.3">
    <location>
        <begin position="1"/>
        <end position="316"/>
    </location>
</feature>
<feature type="domain" description="Rhodanese" evidence="1">
    <location>
        <begin position="136"/>
        <end position="242"/>
    </location>
</feature>
<feature type="region of interest" description="Disordered" evidence="2">
    <location>
        <begin position="35"/>
        <end position="65"/>
    </location>
</feature>
<feature type="compositionally biased region" description="Low complexity" evidence="2">
    <location>
        <begin position="39"/>
        <end position="50"/>
    </location>
</feature>
<accession>P30634</accession>
<keyword id="KW-0131">Cell cycle</keyword>
<keyword id="KW-0132">Cell division</keyword>
<keyword id="KW-0378">Hydrolase</keyword>
<keyword id="KW-0498">Mitosis</keyword>
<keyword id="KW-0904">Protein phosphatase</keyword>
<keyword id="KW-1185">Reference proteome</keyword>
<proteinExistence type="inferred from homology"/>
<name>MPIP3_CAEEL</name>
<protein>
    <recommendedName>
        <fullName>M-phase inducer phosphatase cdc-25.3</fullName>
        <ecNumber>3.1.3.48</ecNumber>
    </recommendedName>
    <alternativeName>
        <fullName>Cell division cycle-related protein 25.3</fullName>
    </alternativeName>
</protein>
<sequence>MCVDVPCENCIVRNDGLRLKCSECAEGSSKLFPRQNRQHSSAISHISNSSPPTRKRSIDGGYTSGTDSANTSEIVIKKRLTFSKKSHSTSEIETWNAHLQVDYHLETVTPSCSTVYQKITSETLIEIMQKLSQIEFMQKYILIDCRYDYEYNGGHIKGAQSLFNPETAADFFFNKDGSKKINRIPIFYCEYSQKRGPTMANNLREVDRKLNSNIYPRCDYEEIYLLEGGYKNFYAFTRGLEKEQRVQLCEPDNYVIMFDDRYKAELRKHQFHKKNVSKPMKKWSSTTSVISILTTSGTRISTLRQTCDPIHEHDAH</sequence>
<evidence type="ECO:0000255" key="1">
    <source>
        <dbReference type="PROSITE-ProRule" id="PRU00173"/>
    </source>
</evidence>
<evidence type="ECO:0000256" key="2">
    <source>
        <dbReference type="SAM" id="MobiDB-lite"/>
    </source>
</evidence>
<evidence type="ECO:0000305" key="3"/>
<organism>
    <name type="scientific">Caenorhabditis elegans</name>
    <dbReference type="NCBI Taxonomy" id="6239"/>
    <lineage>
        <taxon>Eukaryota</taxon>
        <taxon>Metazoa</taxon>
        <taxon>Ecdysozoa</taxon>
        <taxon>Nematoda</taxon>
        <taxon>Chromadorea</taxon>
        <taxon>Rhabditida</taxon>
        <taxon>Rhabditina</taxon>
        <taxon>Rhabditomorpha</taxon>
        <taxon>Rhabditoidea</taxon>
        <taxon>Rhabditidae</taxon>
        <taxon>Peloderinae</taxon>
        <taxon>Caenorhabditis</taxon>
    </lineage>
</organism>
<gene>
    <name type="primary">cdc-25.3</name>
    <name type="ORF">ZK637.11</name>
</gene>
<comment type="catalytic activity">
    <reaction>
        <text>O-phospho-L-tyrosyl-[protein] + H2O = L-tyrosyl-[protein] + phosphate</text>
        <dbReference type="Rhea" id="RHEA:10684"/>
        <dbReference type="Rhea" id="RHEA-COMP:10136"/>
        <dbReference type="Rhea" id="RHEA-COMP:20101"/>
        <dbReference type="ChEBI" id="CHEBI:15377"/>
        <dbReference type="ChEBI" id="CHEBI:43474"/>
        <dbReference type="ChEBI" id="CHEBI:46858"/>
        <dbReference type="ChEBI" id="CHEBI:61978"/>
        <dbReference type="EC" id="3.1.3.48"/>
    </reaction>
</comment>
<comment type="similarity">
    <text evidence="3">Belongs to the MPI phosphatase family.</text>
</comment>
<reference key="1">
    <citation type="journal article" date="1992" name="Nature">
        <title>The C. elegans genome sequencing project: a beginning.</title>
        <authorList>
            <person name="Sulston J."/>
            <person name="Du Z."/>
            <person name="Thomas K."/>
            <person name="Wilson R."/>
            <person name="Hillier L."/>
            <person name="Staden R."/>
            <person name="Halloran N."/>
            <person name="Green P."/>
            <person name="Thierry-Mieg J."/>
            <person name="Qiu L."/>
            <person name="Dear S."/>
            <person name="Coulson A."/>
            <person name="Craxton M."/>
            <person name="Durbin R."/>
            <person name="Berks M."/>
            <person name="Metzstein M."/>
            <person name="Hawkins T."/>
            <person name="Ainscough R."/>
            <person name="Waterston R."/>
        </authorList>
    </citation>
    <scope>NUCLEOTIDE SEQUENCE [LARGE SCALE GENOMIC DNA]</scope>
    <source>
        <strain>Bristol N2</strain>
    </source>
</reference>
<reference key="2">
    <citation type="journal article" date="1998" name="Science">
        <title>Genome sequence of the nematode C. elegans: a platform for investigating biology.</title>
        <authorList>
            <consortium name="The C. elegans sequencing consortium"/>
        </authorList>
    </citation>
    <scope>NUCLEOTIDE SEQUENCE [LARGE SCALE GENOMIC DNA]</scope>
    <source>
        <strain>Bristol N2</strain>
    </source>
</reference>
<reference key="3">
    <citation type="journal article" date="1998" name="Gene">
        <title>The four cdc25 genes from the nematode Caenorhabditis elegans.</title>
        <authorList>
            <person name="Ashcroft N.R."/>
            <person name="Kosinski M.E."/>
            <person name="Wickramasinghe D."/>
            <person name="Donovan P.J."/>
            <person name="Golden A."/>
        </authorList>
    </citation>
    <scope>IDENTIFICATION</scope>
</reference>